<sequence length="139" mass="15324">MDIREIQAALPHRYPMLLVDRVLEVSDDHIVAIKNVTINEPFFNGHFPHYPVMPGVLIMEALAQTAGVLELSKEENKGKLVFYAGMDKVKFKKQVVPGDQLVMTATFIKRRGTIAVVEARAEVDGKLAASGTLTFACGQ</sequence>
<accession>Q48RS4</accession>
<keyword id="KW-0963">Cytoplasm</keyword>
<keyword id="KW-0441">Lipid A biosynthesis</keyword>
<keyword id="KW-0444">Lipid biosynthesis</keyword>
<keyword id="KW-0443">Lipid metabolism</keyword>
<keyword id="KW-0456">Lyase</keyword>
<evidence type="ECO:0000255" key="1">
    <source>
        <dbReference type="HAMAP-Rule" id="MF_00406"/>
    </source>
</evidence>
<evidence type="ECO:0000305" key="2"/>
<feature type="chain" id="PRO_0000230842" description="3-hydroxyacyl-[acyl-carrier-protein] dehydratase FabZ">
    <location>
        <begin position="1"/>
        <end position="139"/>
    </location>
</feature>
<feature type="active site" evidence="1">
    <location>
        <position position="46"/>
    </location>
</feature>
<name>FABZ_STRPM</name>
<comment type="function">
    <text evidence="1">Involved in unsaturated fatty acids biosynthesis. Catalyzes the dehydration of short chain beta-hydroxyacyl-ACPs and long chain saturated and unsaturated beta-hydroxyacyl-ACPs.</text>
</comment>
<comment type="catalytic activity">
    <reaction evidence="1">
        <text>a (3R)-hydroxyacyl-[ACP] = a (2E)-enoyl-[ACP] + H2O</text>
        <dbReference type="Rhea" id="RHEA:13097"/>
        <dbReference type="Rhea" id="RHEA-COMP:9925"/>
        <dbReference type="Rhea" id="RHEA-COMP:9945"/>
        <dbReference type="ChEBI" id="CHEBI:15377"/>
        <dbReference type="ChEBI" id="CHEBI:78784"/>
        <dbReference type="ChEBI" id="CHEBI:78827"/>
        <dbReference type="EC" id="4.2.1.59"/>
    </reaction>
</comment>
<comment type="subcellular location">
    <subcellularLocation>
        <location evidence="1">Cytoplasm</location>
    </subcellularLocation>
</comment>
<comment type="similarity">
    <text evidence="1">Belongs to the thioester dehydratase family. FabZ subfamily.</text>
</comment>
<comment type="sequence caution" evidence="2">
    <conflict type="erroneous initiation">
        <sequence resource="EMBL-CDS" id="AAX72586"/>
    </conflict>
</comment>
<organism>
    <name type="scientific">Streptococcus pyogenes serotype M28 (strain MGAS6180)</name>
    <dbReference type="NCBI Taxonomy" id="319701"/>
    <lineage>
        <taxon>Bacteria</taxon>
        <taxon>Bacillati</taxon>
        <taxon>Bacillota</taxon>
        <taxon>Bacilli</taxon>
        <taxon>Lactobacillales</taxon>
        <taxon>Streptococcaceae</taxon>
        <taxon>Streptococcus</taxon>
    </lineage>
</organism>
<proteinExistence type="inferred from homology"/>
<dbReference type="EC" id="4.2.1.59" evidence="1"/>
<dbReference type="EMBL" id="CP000056">
    <property type="protein sequence ID" value="AAX72586.1"/>
    <property type="status" value="ALT_INIT"/>
    <property type="molecule type" value="Genomic_DNA"/>
</dbReference>
<dbReference type="SMR" id="Q48RS4"/>
<dbReference type="KEGG" id="spb:M28_Spy1476"/>
<dbReference type="HOGENOM" id="CLU_078912_1_2_9"/>
<dbReference type="GO" id="GO:0005737">
    <property type="term" value="C:cytoplasm"/>
    <property type="evidence" value="ECO:0007669"/>
    <property type="project" value="UniProtKB-SubCell"/>
</dbReference>
<dbReference type="GO" id="GO:0016020">
    <property type="term" value="C:membrane"/>
    <property type="evidence" value="ECO:0007669"/>
    <property type="project" value="GOC"/>
</dbReference>
<dbReference type="GO" id="GO:0019171">
    <property type="term" value="F:(3R)-hydroxyacyl-[acyl-carrier-protein] dehydratase activity"/>
    <property type="evidence" value="ECO:0007669"/>
    <property type="project" value="UniProtKB-EC"/>
</dbReference>
<dbReference type="GO" id="GO:0006633">
    <property type="term" value="P:fatty acid biosynthetic process"/>
    <property type="evidence" value="ECO:0007669"/>
    <property type="project" value="UniProtKB-UniRule"/>
</dbReference>
<dbReference type="GO" id="GO:0009245">
    <property type="term" value="P:lipid A biosynthetic process"/>
    <property type="evidence" value="ECO:0007669"/>
    <property type="project" value="UniProtKB-UniRule"/>
</dbReference>
<dbReference type="CDD" id="cd01288">
    <property type="entry name" value="FabZ"/>
    <property type="match status" value="1"/>
</dbReference>
<dbReference type="FunFam" id="3.10.129.10:FF:000001">
    <property type="entry name" value="3-hydroxyacyl-[acyl-carrier-protein] dehydratase FabZ"/>
    <property type="match status" value="1"/>
</dbReference>
<dbReference type="Gene3D" id="3.10.129.10">
    <property type="entry name" value="Hotdog Thioesterase"/>
    <property type="match status" value="1"/>
</dbReference>
<dbReference type="HAMAP" id="MF_00406">
    <property type="entry name" value="FabZ"/>
    <property type="match status" value="1"/>
</dbReference>
<dbReference type="InterPro" id="IPR013114">
    <property type="entry name" value="FabA_FabZ"/>
</dbReference>
<dbReference type="InterPro" id="IPR010084">
    <property type="entry name" value="FabZ"/>
</dbReference>
<dbReference type="InterPro" id="IPR029069">
    <property type="entry name" value="HotDog_dom_sf"/>
</dbReference>
<dbReference type="NCBIfam" id="TIGR01750">
    <property type="entry name" value="fabZ"/>
    <property type="match status" value="1"/>
</dbReference>
<dbReference type="NCBIfam" id="NF000582">
    <property type="entry name" value="PRK00006.1"/>
    <property type="match status" value="1"/>
</dbReference>
<dbReference type="PANTHER" id="PTHR30272">
    <property type="entry name" value="3-HYDROXYACYL-[ACYL-CARRIER-PROTEIN] DEHYDRATASE"/>
    <property type="match status" value="1"/>
</dbReference>
<dbReference type="PANTHER" id="PTHR30272:SF1">
    <property type="entry name" value="3-HYDROXYACYL-[ACYL-CARRIER-PROTEIN] DEHYDRATASE"/>
    <property type="match status" value="1"/>
</dbReference>
<dbReference type="Pfam" id="PF07977">
    <property type="entry name" value="FabA"/>
    <property type="match status" value="1"/>
</dbReference>
<dbReference type="SUPFAM" id="SSF54637">
    <property type="entry name" value="Thioesterase/thiol ester dehydrase-isomerase"/>
    <property type="match status" value="1"/>
</dbReference>
<protein>
    <recommendedName>
        <fullName evidence="1">3-hydroxyacyl-[acyl-carrier-protein] dehydratase FabZ</fullName>
        <ecNumber evidence="1">4.2.1.59</ecNumber>
    </recommendedName>
    <alternativeName>
        <fullName evidence="1">(3R)-hydroxymyristoyl-[acyl-carrier-protein] dehydratase</fullName>
        <shortName evidence="1">(3R)-hydroxymyristoyl-ACP dehydrase</shortName>
    </alternativeName>
    <alternativeName>
        <fullName evidence="1">Beta-hydroxyacyl-ACP dehydratase</fullName>
    </alternativeName>
</protein>
<gene>
    <name evidence="1" type="primary">fabZ</name>
    <name type="ordered locus">M28_Spy1476</name>
</gene>
<reference key="1">
    <citation type="journal article" date="2005" name="J. Infect. Dis.">
        <title>Genome sequence of a serotype M28 strain of group A Streptococcus: potential new insights into puerperal sepsis and bacterial disease specificity.</title>
        <authorList>
            <person name="Green N.M."/>
            <person name="Zhang S."/>
            <person name="Porcella S.F."/>
            <person name="Nagiec M.J."/>
            <person name="Barbian K.D."/>
            <person name="Beres S.B."/>
            <person name="Lefebvre R.B."/>
            <person name="Musser J.M."/>
        </authorList>
    </citation>
    <scope>NUCLEOTIDE SEQUENCE [LARGE SCALE GENOMIC DNA]</scope>
    <source>
        <strain>MGAS6180</strain>
    </source>
</reference>